<name>PCP_BACC2</name>
<accession>B7IMH6</accession>
<proteinExistence type="inferred from homology"/>
<comment type="function">
    <text evidence="1">Removes 5-oxoproline from various penultimate amino acid residues except L-proline.</text>
</comment>
<comment type="catalytic activity">
    <reaction evidence="1">
        <text>Release of an N-terminal pyroglutamyl group from a polypeptide, the second amino acid generally not being Pro.</text>
        <dbReference type="EC" id="3.4.19.3"/>
    </reaction>
</comment>
<comment type="subunit">
    <text evidence="1">Homotetramer.</text>
</comment>
<comment type="subcellular location">
    <subcellularLocation>
        <location evidence="1">Cytoplasm</location>
    </subcellularLocation>
</comment>
<comment type="similarity">
    <text evidence="1">Belongs to the peptidase C15 family.</text>
</comment>
<organism>
    <name type="scientific">Bacillus cereus (strain G9842)</name>
    <dbReference type="NCBI Taxonomy" id="405531"/>
    <lineage>
        <taxon>Bacteria</taxon>
        <taxon>Bacillati</taxon>
        <taxon>Bacillota</taxon>
        <taxon>Bacilli</taxon>
        <taxon>Bacillales</taxon>
        <taxon>Bacillaceae</taxon>
        <taxon>Bacillus</taxon>
        <taxon>Bacillus cereus group</taxon>
    </lineage>
</organism>
<reference key="1">
    <citation type="submission" date="2008-10" db="EMBL/GenBank/DDBJ databases">
        <title>Genome sequence of Bacillus cereus G9842.</title>
        <authorList>
            <person name="Dodson R.J."/>
            <person name="Durkin A.S."/>
            <person name="Rosovitz M.J."/>
            <person name="Rasko D.A."/>
            <person name="Hoffmaster A."/>
            <person name="Ravel J."/>
            <person name="Sutton G."/>
        </authorList>
    </citation>
    <scope>NUCLEOTIDE SEQUENCE [LARGE SCALE GENOMIC DNA]</scope>
    <source>
        <strain>G9842</strain>
    </source>
</reference>
<gene>
    <name evidence="1" type="primary">pcp</name>
    <name type="ordered locus">BCG9842_B2153</name>
</gene>
<evidence type="ECO:0000255" key="1">
    <source>
        <dbReference type="HAMAP-Rule" id="MF_00417"/>
    </source>
</evidence>
<dbReference type="EC" id="3.4.19.3" evidence="1"/>
<dbReference type="EMBL" id="CP001186">
    <property type="protein sequence ID" value="ACK96355.1"/>
    <property type="molecule type" value="Genomic_DNA"/>
</dbReference>
<dbReference type="RefSeq" id="WP_000859748.1">
    <property type="nucleotide sequence ID" value="NC_011772.1"/>
</dbReference>
<dbReference type="SMR" id="B7IMH6"/>
<dbReference type="MEROPS" id="C15.001"/>
<dbReference type="KEGG" id="bcg:BCG9842_B2153"/>
<dbReference type="HOGENOM" id="CLU_043960_4_0_9"/>
<dbReference type="Proteomes" id="UP000006744">
    <property type="component" value="Chromosome"/>
</dbReference>
<dbReference type="GO" id="GO:0005829">
    <property type="term" value="C:cytosol"/>
    <property type="evidence" value="ECO:0007669"/>
    <property type="project" value="InterPro"/>
</dbReference>
<dbReference type="GO" id="GO:0016920">
    <property type="term" value="F:pyroglutamyl-peptidase activity"/>
    <property type="evidence" value="ECO:0007669"/>
    <property type="project" value="UniProtKB-UniRule"/>
</dbReference>
<dbReference type="GO" id="GO:0006508">
    <property type="term" value="P:proteolysis"/>
    <property type="evidence" value="ECO:0007669"/>
    <property type="project" value="UniProtKB-KW"/>
</dbReference>
<dbReference type="CDD" id="cd00501">
    <property type="entry name" value="Peptidase_C15"/>
    <property type="match status" value="1"/>
</dbReference>
<dbReference type="FunFam" id="3.40.630.20:FF:000001">
    <property type="entry name" value="Pyrrolidone-carboxylate peptidase"/>
    <property type="match status" value="1"/>
</dbReference>
<dbReference type="Gene3D" id="3.40.630.20">
    <property type="entry name" value="Peptidase C15, pyroglutamyl peptidase I-like"/>
    <property type="match status" value="1"/>
</dbReference>
<dbReference type="HAMAP" id="MF_00417">
    <property type="entry name" value="Pyrrolid_peptidase"/>
    <property type="match status" value="1"/>
</dbReference>
<dbReference type="InterPro" id="IPR000816">
    <property type="entry name" value="Peptidase_C15"/>
</dbReference>
<dbReference type="InterPro" id="IPR016125">
    <property type="entry name" value="Peptidase_C15-like"/>
</dbReference>
<dbReference type="InterPro" id="IPR036440">
    <property type="entry name" value="Peptidase_C15-like_sf"/>
</dbReference>
<dbReference type="InterPro" id="IPR029762">
    <property type="entry name" value="PGP-I_bact-type"/>
</dbReference>
<dbReference type="InterPro" id="IPR033694">
    <property type="entry name" value="PGPEP1_Cys_AS"/>
</dbReference>
<dbReference type="InterPro" id="IPR033693">
    <property type="entry name" value="PGPEP1_Glu_AS"/>
</dbReference>
<dbReference type="NCBIfam" id="NF009676">
    <property type="entry name" value="PRK13197.1"/>
    <property type="match status" value="1"/>
</dbReference>
<dbReference type="NCBIfam" id="TIGR00504">
    <property type="entry name" value="pyro_pdase"/>
    <property type="match status" value="1"/>
</dbReference>
<dbReference type="PANTHER" id="PTHR23402">
    <property type="entry name" value="PROTEASE FAMILY C15 PYROGLUTAMYL-PEPTIDASE I-RELATED"/>
    <property type="match status" value="1"/>
</dbReference>
<dbReference type="PANTHER" id="PTHR23402:SF1">
    <property type="entry name" value="PYROGLUTAMYL-PEPTIDASE I"/>
    <property type="match status" value="1"/>
</dbReference>
<dbReference type="Pfam" id="PF01470">
    <property type="entry name" value="Peptidase_C15"/>
    <property type="match status" value="1"/>
</dbReference>
<dbReference type="PIRSF" id="PIRSF015592">
    <property type="entry name" value="Prld-crbxl_pptds"/>
    <property type="match status" value="1"/>
</dbReference>
<dbReference type="PRINTS" id="PR00706">
    <property type="entry name" value="PYROGLUPTASE"/>
</dbReference>
<dbReference type="SUPFAM" id="SSF53182">
    <property type="entry name" value="Pyrrolidone carboxyl peptidase (pyroglutamate aminopeptidase)"/>
    <property type="match status" value="1"/>
</dbReference>
<dbReference type="PROSITE" id="PS01334">
    <property type="entry name" value="PYRASE_CYS"/>
    <property type="match status" value="1"/>
</dbReference>
<dbReference type="PROSITE" id="PS01333">
    <property type="entry name" value="PYRASE_GLU"/>
    <property type="match status" value="1"/>
</dbReference>
<feature type="chain" id="PRO_1000123987" description="Pyrrolidone-carboxylate peptidase">
    <location>
        <begin position="1"/>
        <end position="215"/>
    </location>
</feature>
<feature type="active site" evidence="1">
    <location>
        <position position="80"/>
    </location>
</feature>
<feature type="active site" evidence="1">
    <location>
        <position position="143"/>
    </location>
</feature>
<feature type="active site" evidence="1">
    <location>
        <position position="167"/>
    </location>
</feature>
<keyword id="KW-0963">Cytoplasm</keyword>
<keyword id="KW-0378">Hydrolase</keyword>
<keyword id="KW-0645">Protease</keyword>
<keyword id="KW-0788">Thiol protease</keyword>
<protein>
    <recommendedName>
        <fullName evidence="1">Pyrrolidone-carboxylate peptidase</fullName>
        <ecNumber evidence="1">3.4.19.3</ecNumber>
    </recommendedName>
    <alternativeName>
        <fullName evidence="1">5-oxoprolyl-peptidase</fullName>
    </alternativeName>
    <alternativeName>
        <fullName evidence="1">Pyroglutamyl-peptidase I</fullName>
        <shortName evidence="1">PGP-I</shortName>
        <shortName evidence="1">Pyrase</shortName>
    </alternativeName>
</protein>
<sequence length="215" mass="23626">MKTVLLTGFDPFGGESINPAWEVAKSLHEKTIGEYTIISKQVPTVFHKSIKVLKEYIEELNPEMIICIGQAGGRPDITIERVAINVDDARIADNEGNQPIDVPVAEEGPAAYWSTLPMKAIVKRLQEEGIPAFVSQTAGTFVCNHLFYGLMHELEKRDKKIKGGFIHIPFLPEQASKYPGQPSMSLSTIRKGIELAVEVTTTVEVDIVEVGGATH</sequence>